<protein>
    <recommendedName>
        <fullName>Neogenin</fullName>
    </recommendedName>
</protein>
<proteinExistence type="evidence at protein level"/>
<sequence>AAAKNGSPPQSAGASVRTFTPLYFLVEPVDTLSVRGSSVILNCSAYSEPSPNIEWKKDGTFLNLVSDDRRQLLPDGSLFISNVVHSKHNKPDEGFYQCVATVDNLGTIVSRTAKLAVAGLPRFTSQPEPSSIYVGNSGILNCEVNADLVPFVRWEQNRQPLLLDDRIVKLPSGTLVISNATEGDEGLYRCIVESGGPPKFSDEAELKVLQESEEMLDLVFLMRPSSMIKVIGQSAVLPCVASGLPAPVIRWMKNEDVLDTESSGRLALLAGGSLEISDVTEDDAGTYFCVADNGNKTIEAQAELTVQVPPEFLKQPANIYARESMDIVFECEVTGKPAPTVKWVKNGDVVIPSDYFKIVKEHNLQVLGLVKSDEGFYQCIAENDVGNAQAGAQLIILEHAPATTGPLPSAPRDVVASLVSTRFIKLTWRTPASDPHGDNLTYSVFYTKEGVARERVENTSQPGEMQVTIQNLMPATVYIFKVMAQNKHGSGESSAPLRVETQPEVQLPGPAPNIRAYATSPTSITVTWETPLSGNGEIQNYKLYYMEKGTDKEQDVDVSSHSYTINGLKKYTEYSFRVVAYNKHGPGVSTQDVAVRTLSDVPSAAPQNLSLEVRNSKSIVIHWQPPSSATQNGQITGYKIRYRKASRKSDVTETVVTGTQLSQLIEGLDRGTEYNFRVAALTVNGTGPATDWLSAETFESDLDESRVPEVPSSLHVRPLVTSIVVSWTPPENQNIVVRGYAIGYGIGSPHAQTIKVDYKQRYYTIENLDPSSHYVITLKAFNNVGEGIPLYESAVTRPHTDTSEVDLFVINAPYTPVPDPTPMMPPVGVQASILSHDTIRITWADNSLPKHQKITDSRYYTVRWKTNIPANTKYKNANATTLSYLVTGLKPNTLYEFSVMVTKGRRSSTWSMTAHGATFELVPTSPPKDVTVVSKEGKPRTIIVNWQPPSEANGKITGYIIYYSTDVNAEIHDWVIEPVVGNRLTHQIQELTLDTPYYFKIQARNSKGMGPMSEAVQFRTPKADSSDKMPNDQALGSAGKGGRLPDLGSDYKPPMSGSNSPHGSPTSPLDSNMLLVIIVSIGVITIVVVVIIAVFCTRRTTSHQKKKRAACKSVNGSHKYKGNCKDVKPPDLWIHHERLELKPIDKSPDPNPVMTDTPIPRNSQDITPVDNSMDSNIHQRRNSYRGHESEDSMSTLAGRRGMRPKMMMPFDSQPPQQSVRNTPSTDTMPASSSQTCCTDHQDPEGATSSSYLASSQEEDSGQSLPTAHVRPSHPLKSFAVPAIPPPGPPIYDPALPSTPLLSQQALNHHLHSVKTASIGTLGRSRPPMPVVVPSAPEVQEATRMLEDSESSYEPDELTKEMAHLEGLMKDLNAITTA</sequence>
<feature type="signal peptide" evidence="4">
    <location>
        <begin position="1" status="less than"/>
        <end position="2"/>
    </location>
</feature>
<feature type="chain" id="PRO_0000015045" description="Neogenin">
    <location>
        <begin position="3"/>
        <end position="1377"/>
    </location>
</feature>
<feature type="topological domain" description="Extracellular" evidence="4">
    <location>
        <begin position="3"/>
        <end position="1074"/>
    </location>
</feature>
<feature type="transmembrane region" description="Helical" evidence="4">
    <location>
        <begin position="1075"/>
        <end position="1095"/>
    </location>
</feature>
<feature type="topological domain" description="Cytoplasmic" evidence="4">
    <location>
        <begin position="1096"/>
        <end position="1377"/>
    </location>
</feature>
<feature type="domain" description="Ig-like C2-type 1">
    <location>
        <begin position="21"/>
        <end position="114"/>
    </location>
</feature>
<feature type="domain" description="Ig-like C2-type 2">
    <location>
        <begin position="121"/>
        <end position="206"/>
    </location>
</feature>
<feature type="domain" description="Ig-like C2-type 3">
    <location>
        <begin position="198"/>
        <end position="305"/>
    </location>
</feature>
<feature type="domain" description="Ig-like C2-type 4">
    <location>
        <begin position="310"/>
        <end position="395"/>
    </location>
</feature>
<feature type="domain" description="Fibronectin type-III 1" evidence="6">
    <location>
        <begin position="410"/>
        <end position="504"/>
    </location>
</feature>
<feature type="domain" description="Fibronectin type-III 2" evidence="6">
    <location>
        <begin position="510"/>
        <end position="600"/>
    </location>
</feature>
<feature type="domain" description="Fibronectin type-III 3" evidence="6">
    <location>
        <begin position="605"/>
        <end position="700"/>
    </location>
</feature>
<feature type="domain" description="Fibronectin type-III 4" evidence="6">
    <location>
        <begin position="710"/>
        <end position="800"/>
    </location>
</feature>
<feature type="domain" description="Fibronectin type-III 5" evidence="6">
    <location>
        <begin position="825"/>
        <end position="924"/>
    </location>
</feature>
<feature type="domain" description="Fibronectin type-III 6" evidence="6">
    <location>
        <begin position="926"/>
        <end position="1023"/>
    </location>
</feature>
<feature type="region of interest" description="Disordered" evidence="7">
    <location>
        <begin position="1010"/>
        <end position="1066"/>
    </location>
</feature>
<feature type="region of interest" description="Disordered" evidence="7">
    <location>
        <begin position="1143"/>
        <end position="1281"/>
    </location>
</feature>
<feature type="compositionally biased region" description="Basic and acidic residues" evidence="7">
    <location>
        <begin position="1021"/>
        <end position="1030"/>
    </location>
</feature>
<feature type="compositionally biased region" description="Polar residues" evidence="7">
    <location>
        <begin position="1056"/>
        <end position="1066"/>
    </location>
</feature>
<feature type="compositionally biased region" description="Polar residues" evidence="7">
    <location>
        <begin position="1160"/>
        <end position="1176"/>
    </location>
</feature>
<feature type="compositionally biased region" description="Polar residues" evidence="7">
    <location>
        <begin position="1213"/>
        <end position="1238"/>
    </location>
</feature>
<feature type="compositionally biased region" description="Polar residues" evidence="7">
    <location>
        <begin position="1246"/>
        <end position="1265"/>
    </location>
</feature>
<feature type="modified residue" description="Phosphoserine" evidence="2">
    <location>
        <position position="1147"/>
    </location>
</feature>
<feature type="modified residue" description="Phosphoserine" evidence="9">
    <location>
        <position position="1163"/>
    </location>
</feature>
<feature type="modified residue" description="Phosphothreonine" evidence="3">
    <location>
        <position position="1167"/>
    </location>
</feature>
<feature type="modified residue" description="Phosphoserine" evidence="3">
    <location>
        <position position="1317"/>
    </location>
</feature>
<feature type="modified residue" description="Phosphothreonine" evidence="3">
    <location>
        <position position="1320"/>
    </location>
</feature>
<feature type="modified residue" description="Phosphoserine" evidence="9">
    <location>
        <position position="1348"/>
    </location>
</feature>
<feature type="modified residue" description="Phosphoserine" evidence="3">
    <location>
        <position position="1350"/>
    </location>
</feature>
<feature type="modified residue" description="Phosphoserine" evidence="9">
    <location>
        <position position="1351"/>
    </location>
</feature>
<feature type="glycosylation site" description="N-linked (GlcNAc...) asparagine" evidence="4">
    <location>
        <position position="42"/>
    </location>
</feature>
<feature type="glycosylation site" description="N-linked (GlcNAc...) asparagine" evidence="4">
    <location>
        <position position="179"/>
    </location>
</feature>
<feature type="glycosylation site" description="N-linked (GlcNAc...) asparagine" evidence="4">
    <location>
        <position position="295"/>
    </location>
</feature>
<feature type="glycosylation site" description="N-linked (GlcNAc...) asparagine" evidence="4">
    <location>
        <position position="439"/>
    </location>
</feature>
<feature type="glycosylation site" description="N-linked (GlcNAc...) asparagine" evidence="4">
    <location>
        <position position="458"/>
    </location>
</feature>
<feature type="glycosylation site" description="N-linked (GlcNAc...) asparagine" evidence="4">
    <location>
        <position position="608"/>
    </location>
</feature>
<feature type="glycosylation site" description="N-linked (GlcNAc...) asparagine" evidence="4">
    <location>
        <position position="684"/>
    </location>
</feature>
<feature type="glycosylation site" description="N-linked (GlcNAc...) asparagine" evidence="4">
    <location>
        <position position="878"/>
    </location>
</feature>
<feature type="disulfide bond" evidence="5">
    <location>
        <begin position="43"/>
        <end position="98"/>
    </location>
</feature>
<feature type="disulfide bond" evidence="5">
    <location>
        <begin position="142"/>
        <end position="190"/>
    </location>
</feature>
<feature type="disulfide bond" evidence="5">
    <location>
        <begin position="239"/>
        <end position="289"/>
    </location>
</feature>
<feature type="disulfide bond" evidence="5">
    <location>
        <begin position="331"/>
        <end position="379"/>
    </location>
</feature>
<feature type="non-terminal residue">
    <location>
        <position position="1"/>
    </location>
</feature>
<reference key="1">
    <citation type="journal article" date="1996" name="Cell">
        <title>Deleted in colorectal cancer (DCC) encodes a netrin receptor.</title>
        <authorList>
            <person name="Keino-Masu K."/>
            <person name="Masu M."/>
            <person name="Hinck L."/>
            <person name="Leonardo E.D."/>
            <person name="Chan S.S.-Y."/>
            <person name="Culotti J.G."/>
            <person name="Tessier-Lavigne M."/>
        </authorList>
    </citation>
    <scope>NUCLEOTIDE SEQUENCE [MRNA]</scope>
    <source>
        <tissue>Brain</tissue>
    </source>
</reference>
<reference key="2">
    <citation type="journal article" date="2012" name="Nat. Commun.">
        <title>Quantitative maps of protein phosphorylation sites across 14 different rat organs and tissues.</title>
        <authorList>
            <person name="Lundby A."/>
            <person name="Secher A."/>
            <person name="Lage K."/>
            <person name="Nordsborg N.B."/>
            <person name="Dmytriyev A."/>
            <person name="Lundby C."/>
            <person name="Olsen J.V."/>
        </authorList>
    </citation>
    <scope>PHOSPHORYLATION [LARGE SCALE ANALYSIS] AT SER-1163; SER-1348 AND SER-1351</scope>
    <scope>IDENTIFICATION BY MASS SPECTROMETRY [LARGE SCALE ANALYSIS]</scope>
</reference>
<gene>
    <name type="primary">Neo1</name>
    <name type="synonym">Ngn</name>
</gene>
<organism>
    <name type="scientific">Rattus norvegicus</name>
    <name type="common">Rat</name>
    <dbReference type="NCBI Taxonomy" id="10116"/>
    <lineage>
        <taxon>Eukaryota</taxon>
        <taxon>Metazoa</taxon>
        <taxon>Chordata</taxon>
        <taxon>Craniata</taxon>
        <taxon>Vertebrata</taxon>
        <taxon>Euteleostomi</taxon>
        <taxon>Mammalia</taxon>
        <taxon>Eutheria</taxon>
        <taxon>Euarchontoglires</taxon>
        <taxon>Glires</taxon>
        <taxon>Rodentia</taxon>
        <taxon>Myomorpha</taxon>
        <taxon>Muroidea</taxon>
        <taxon>Muridae</taxon>
        <taxon>Murinae</taxon>
        <taxon>Rattus</taxon>
    </lineage>
</organism>
<name>NEO1_RAT</name>
<keyword id="KW-0130">Cell adhesion</keyword>
<keyword id="KW-1003">Cell membrane</keyword>
<keyword id="KW-1015">Disulfide bond</keyword>
<keyword id="KW-0325">Glycoprotein</keyword>
<keyword id="KW-0393">Immunoglobulin domain</keyword>
<keyword id="KW-0472">Membrane</keyword>
<keyword id="KW-0597">Phosphoprotein</keyword>
<keyword id="KW-1185">Reference proteome</keyword>
<keyword id="KW-0677">Repeat</keyword>
<keyword id="KW-0732">Signal</keyword>
<keyword id="KW-0812">Transmembrane</keyword>
<keyword id="KW-1133">Transmembrane helix</keyword>
<dbReference type="EMBL" id="U68726">
    <property type="protein sequence ID" value="AAB41100.1"/>
    <property type="molecule type" value="mRNA"/>
</dbReference>
<dbReference type="BMRB" id="P97603"/>
<dbReference type="SMR" id="P97603"/>
<dbReference type="FunCoup" id="P97603">
    <property type="interactions" value="2464"/>
</dbReference>
<dbReference type="STRING" id="10116.ENSRNOP00000009496"/>
<dbReference type="GlyCosmos" id="P97603">
    <property type="glycosylation" value="8 sites, 3 glycans"/>
</dbReference>
<dbReference type="GlyGen" id="P97603">
    <property type="glycosylation" value="9 sites, 3 N-linked glycans (1 site)"/>
</dbReference>
<dbReference type="iPTMnet" id="P97603"/>
<dbReference type="PhosphoSitePlus" id="P97603"/>
<dbReference type="SwissPalm" id="P97603"/>
<dbReference type="jPOST" id="P97603"/>
<dbReference type="PaxDb" id="10116-ENSRNOP00000060347"/>
<dbReference type="UCSC" id="RGD:619837">
    <property type="organism name" value="rat"/>
</dbReference>
<dbReference type="AGR" id="RGD:619837"/>
<dbReference type="RGD" id="619837">
    <property type="gene designation" value="Neo1"/>
</dbReference>
<dbReference type="eggNOG" id="KOG4221">
    <property type="taxonomic scope" value="Eukaryota"/>
</dbReference>
<dbReference type="InParanoid" id="P97603"/>
<dbReference type="PhylomeDB" id="P97603"/>
<dbReference type="Proteomes" id="UP000002494">
    <property type="component" value="Unplaced"/>
</dbReference>
<dbReference type="GO" id="GO:0009986">
    <property type="term" value="C:cell surface"/>
    <property type="evidence" value="ECO:0000266"/>
    <property type="project" value="RGD"/>
</dbReference>
<dbReference type="GO" id="GO:0098978">
    <property type="term" value="C:glutamatergic synapse"/>
    <property type="evidence" value="ECO:0000266"/>
    <property type="project" value="RGD"/>
</dbReference>
<dbReference type="GO" id="GO:0030426">
    <property type="term" value="C:growth cone"/>
    <property type="evidence" value="ECO:0000266"/>
    <property type="project" value="RGD"/>
</dbReference>
<dbReference type="GO" id="GO:0097708">
    <property type="term" value="C:intracellular vesicle"/>
    <property type="evidence" value="ECO:0000266"/>
    <property type="project" value="RGD"/>
</dbReference>
<dbReference type="GO" id="GO:0016020">
    <property type="term" value="C:membrane"/>
    <property type="evidence" value="ECO:0000266"/>
    <property type="project" value="RGD"/>
</dbReference>
<dbReference type="GO" id="GO:0043025">
    <property type="term" value="C:neuronal cell body"/>
    <property type="evidence" value="ECO:0000314"/>
    <property type="project" value="RGD"/>
</dbReference>
<dbReference type="GO" id="GO:0005886">
    <property type="term" value="C:plasma membrane"/>
    <property type="evidence" value="ECO:0000318"/>
    <property type="project" value="GO_Central"/>
</dbReference>
<dbReference type="GO" id="GO:0098797">
    <property type="term" value="C:plasma membrane protein complex"/>
    <property type="evidence" value="ECO:0000266"/>
    <property type="project" value="RGD"/>
</dbReference>
<dbReference type="GO" id="GO:0098839">
    <property type="term" value="C:postsynaptic density membrane"/>
    <property type="evidence" value="ECO:0000266"/>
    <property type="project" value="RGD"/>
</dbReference>
<dbReference type="GO" id="GO:0070700">
    <property type="term" value="F:BMP receptor binding"/>
    <property type="evidence" value="ECO:0000266"/>
    <property type="project" value="RGD"/>
</dbReference>
<dbReference type="GO" id="GO:0045296">
    <property type="term" value="F:cadherin binding"/>
    <property type="evidence" value="ECO:0000266"/>
    <property type="project" value="RGD"/>
</dbReference>
<dbReference type="GO" id="GO:0039706">
    <property type="term" value="F:co-receptor binding"/>
    <property type="evidence" value="ECO:0000266"/>
    <property type="project" value="RGD"/>
</dbReference>
<dbReference type="GO" id="GO:0038023">
    <property type="term" value="F:signaling receptor activity"/>
    <property type="evidence" value="ECO:0000266"/>
    <property type="project" value="RGD"/>
</dbReference>
<dbReference type="GO" id="GO:0007411">
    <property type="term" value="P:axon guidance"/>
    <property type="evidence" value="ECO:0000318"/>
    <property type="project" value="GO_Central"/>
</dbReference>
<dbReference type="GO" id="GO:0098609">
    <property type="term" value="P:cell-cell adhesion"/>
    <property type="evidence" value="ECO:0000318"/>
    <property type="project" value="GO_Central"/>
</dbReference>
<dbReference type="GO" id="GO:0006879">
    <property type="term" value="P:intracellular iron ion homeostasis"/>
    <property type="evidence" value="ECO:0000266"/>
    <property type="project" value="RGD"/>
</dbReference>
<dbReference type="GO" id="GO:0060586">
    <property type="term" value="P:multicellular organismal-level iron ion homeostasis"/>
    <property type="evidence" value="ECO:0000266"/>
    <property type="project" value="RGD"/>
</dbReference>
<dbReference type="GO" id="GO:0007520">
    <property type="term" value="P:myoblast fusion"/>
    <property type="evidence" value="ECO:0000266"/>
    <property type="project" value="RGD"/>
</dbReference>
<dbReference type="GO" id="GO:0048681">
    <property type="term" value="P:negative regulation of axon regeneration"/>
    <property type="evidence" value="ECO:0000266"/>
    <property type="project" value="RGD"/>
</dbReference>
<dbReference type="GO" id="GO:0050709">
    <property type="term" value="P:negative regulation of protein secretion"/>
    <property type="evidence" value="ECO:0000266"/>
    <property type="project" value="RGD"/>
</dbReference>
<dbReference type="GO" id="GO:0001764">
    <property type="term" value="P:neuron migration"/>
    <property type="evidence" value="ECO:0000318"/>
    <property type="project" value="GO_Central"/>
</dbReference>
<dbReference type="GO" id="GO:0030513">
    <property type="term" value="P:positive regulation of BMP signaling pathway"/>
    <property type="evidence" value="ECO:0000266"/>
    <property type="project" value="RGD"/>
</dbReference>
<dbReference type="GO" id="GO:0009306">
    <property type="term" value="P:protein secretion"/>
    <property type="evidence" value="ECO:0000266"/>
    <property type="project" value="RGD"/>
</dbReference>
<dbReference type="GO" id="GO:0048679">
    <property type="term" value="P:regulation of axon regeneration"/>
    <property type="evidence" value="ECO:0000266"/>
    <property type="project" value="RGD"/>
</dbReference>
<dbReference type="GO" id="GO:0006355">
    <property type="term" value="P:regulation of DNA-templated transcription"/>
    <property type="evidence" value="ECO:0000266"/>
    <property type="project" value="RGD"/>
</dbReference>
<dbReference type="GO" id="GO:0099550">
    <property type="term" value="P:trans-synaptic signaling, modulating synaptic transmission"/>
    <property type="evidence" value="ECO:0000266"/>
    <property type="project" value="RGD"/>
</dbReference>
<dbReference type="CDD" id="cd00063">
    <property type="entry name" value="FN3"/>
    <property type="match status" value="6"/>
</dbReference>
<dbReference type="CDD" id="cd00096">
    <property type="entry name" value="Ig"/>
    <property type="match status" value="1"/>
</dbReference>
<dbReference type="CDD" id="cd05722">
    <property type="entry name" value="IgI_1_Neogenin_like"/>
    <property type="match status" value="1"/>
</dbReference>
<dbReference type="CDD" id="cd05723">
    <property type="entry name" value="IgI_4_Neogenin_like"/>
    <property type="match status" value="1"/>
</dbReference>
<dbReference type="FunFam" id="2.60.40.10:FF:000004">
    <property type="entry name" value="DCC isoform 1"/>
    <property type="match status" value="2"/>
</dbReference>
<dbReference type="FunFam" id="2.60.40.10:FF:000316">
    <property type="entry name" value="Neogenin 1"/>
    <property type="match status" value="1"/>
</dbReference>
<dbReference type="FunFam" id="2.60.40.10:FF:000777">
    <property type="entry name" value="Neogenin 1"/>
    <property type="match status" value="1"/>
</dbReference>
<dbReference type="FunFam" id="2.60.40.10:FF:000101">
    <property type="entry name" value="Neogenin isoform 1"/>
    <property type="match status" value="1"/>
</dbReference>
<dbReference type="FunFam" id="2.60.40.10:FF:000106">
    <property type="entry name" value="Neogenin isoform 1"/>
    <property type="match status" value="1"/>
</dbReference>
<dbReference type="FunFam" id="2.60.40.10:FF:000133">
    <property type="entry name" value="Neogenin isoform 1"/>
    <property type="match status" value="1"/>
</dbReference>
<dbReference type="FunFam" id="2.60.40.10:FF:000189">
    <property type="entry name" value="Neogenin isoform 3"/>
    <property type="match status" value="1"/>
</dbReference>
<dbReference type="FunFam" id="2.60.40.10:FF:000216">
    <property type="entry name" value="neogenin isoform X1"/>
    <property type="match status" value="1"/>
</dbReference>
<dbReference type="FunFam" id="2.60.40.10:FF:000187">
    <property type="entry name" value="neogenin isoform X2"/>
    <property type="match status" value="1"/>
</dbReference>
<dbReference type="Gene3D" id="2.60.40.10">
    <property type="entry name" value="Immunoglobulins"/>
    <property type="match status" value="10"/>
</dbReference>
<dbReference type="InterPro" id="IPR003961">
    <property type="entry name" value="FN3_dom"/>
</dbReference>
<dbReference type="InterPro" id="IPR036116">
    <property type="entry name" value="FN3_sf"/>
</dbReference>
<dbReference type="InterPro" id="IPR007110">
    <property type="entry name" value="Ig-like_dom"/>
</dbReference>
<dbReference type="InterPro" id="IPR036179">
    <property type="entry name" value="Ig-like_dom_sf"/>
</dbReference>
<dbReference type="InterPro" id="IPR013783">
    <property type="entry name" value="Ig-like_fold"/>
</dbReference>
<dbReference type="InterPro" id="IPR013098">
    <property type="entry name" value="Ig_I-set"/>
</dbReference>
<dbReference type="InterPro" id="IPR003599">
    <property type="entry name" value="Ig_sub"/>
</dbReference>
<dbReference type="InterPro" id="IPR003598">
    <property type="entry name" value="Ig_sub2"/>
</dbReference>
<dbReference type="InterPro" id="IPR010560">
    <property type="entry name" value="Neogenin_C"/>
</dbReference>
<dbReference type="PANTHER" id="PTHR44170:SF14">
    <property type="entry name" value="NEOGENIN"/>
    <property type="match status" value="1"/>
</dbReference>
<dbReference type="PANTHER" id="PTHR44170">
    <property type="entry name" value="PROTEIN SIDEKICK"/>
    <property type="match status" value="1"/>
</dbReference>
<dbReference type="Pfam" id="PF00041">
    <property type="entry name" value="fn3"/>
    <property type="match status" value="6"/>
</dbReference>
<dbReference type="Pfam" id="PF07679">
    <property type="entry name" value="I-set"/>
    <property type="match status" value="3"/>
</dbReference>
<dbReference type="Pfam" id="PF13895">
    <property type="entry name" value="Ig_2"/>
    <property type="match status" value="1"/>
</dbReference>
<dbReference type="Pfam" id="PF06583">
    <property type="entry name" value="Neogenin_C"/>
    <property type="match status" value="2"/>
</dbReference>
<dbReference type="PRINTS" id="PR00014">
    <property type="entry name" value="FNTYPEIII"/>
</dbReference>
<dbReference type="SMART" id="SM00060">
    <property type="entry name" value="FN3"/>
    <property type="match status" value="6"/>
</dbReference>
<dbReference type="SMART" id="SM00409">
    <property type="entry name" value="IG"/>
    <property type="match status" value="4"/>
</dbReference>
<dbReference type="SMART" id="SM00408">
    <property type="entry name" value="IGc2"/>
    <property type="match status" value="4"/>
</dbReference>
<dbReference type="SUPFAM" id="SSF49265">
    <property type="entry name" value="Fibronectin type III"/>
    <property type="match status" value="4"/>
</dbReference>
<dbReference type="SUPFAM" id="SSF48726">
    <property type="entry name" value="Immunoglobulin"/>
    <property type="match status" value="4"/>
</dbReference>
<dbReference type="PROSITE" id="PS50853">
    <property type="entry name" value="FN3"/>
    <property type="match status" value="6"/>
</dbReference>
<dbReference type="PROSITE" id="PS50835">
    <property type="entry name" value="IG_LIKE"/>
    <property type="match status" value="4"/>
</dbReference>
<accession>P97603</accession>
<evidence type="ECO:0000250" key="1"/>
<evidence type="ECO:0000250" key="2">
    <source>
        <dbReference type="UniProtKB" id="P97798"/>
    </source>
</evidence>
<evidence type="ECO:0000250" key="3">
    <source>
        <dbReference type="UniProtKB" id="Q92859"/>
    </source>
</evidence>
<evidence type="ECO:0000255" key="4"/>
<evidence type="ECO:0000255" key="5">
    <source>
        <dbReference type="PROSITE-ProRule" id="PRU00114"/>
    </source>
</evidence>
<evidence type="ECO:0000255" key="6">
    <source>
        <dbReference type="PROSITE-ProRule" id="PRU00316"/>
    </source>
</evidence>
<evidence type="ECO:0000256" key="7">
    <source>
        <dbReference type="SAM" id="MobiDB-lite"/>
    </source>
</evidence>
<evidence type="ECO:0000305" key="8"/>
<evidence type="ECO:0007744" key="9">
    <source>
    </source>
</evidence>
<comment type="function">
    <text evidence="1">Multi-functional cell surface receptor regulating cell adhesion in many diverse developmental processes, including neural tube and mammary gland formation, myogenesis and angiogenesis. Receptor for members of the BMP, netrin, and repulsive guidance molecule (RGM) families. Netrin-Neogenin interactions result in a chemoattractive axon guidance response and cell-cell adhesion, the interaction between NEO1/Neogenin and RGMa and RGMb induces a chemorepulsive response (By similarity).</text>
</comment>
<comment type="subunit">
    <text evidence="1">Interacts with MYO10 (By similarity). Interacts with RGMA and RGMB. Interacts with BMP2, BMP4, BMP6, and BMP7 (By similarity).</text>
</comment>
<comment type="subcellular location">
    <subcellularLocation>
        <location>Cell membrane</location>
        <topology>Single-pass type I membrane protein</topology>
    </subcellularLocation>
</comment>
<comment type="domain">
    <text evidence="1">The Fibronectin repeats 5 and 6 mediate interaction with RGM family molecules.</text>
</comment>
<comment type="similarity">
    <text evidence="8">Belongs to the immunoglobulin superfamily. DCC family.</text>
</comment>